<gene>
    <name evidence="8" type="primary">IYD</name>
    <name evidence="9" type="synonym">LOC100199794</name>
</gene>
<proteinExistence type="evidence at protein level"/>
<evidence type="ECO:0000250" key="1">
    <source>
        <dbReference type="UniProtKB" id="Q6PHW0"/>
    </source>
</evidence>
<evidence type="ECO:0000250" key="2">
    <source>
        <dbReference type="UniProtKB" id="Q9DCX8"/>
    </source>
</evidence>
<evidence type="ECO:0000255" key="3"/>
<evidence type="ECO:0000269" key="4">
    <source>
    </source>
</evidence>
<evidence type="ECO:0000303" key="5">
    <source>
    </source>
</evidence>
<evidence type="ECO:0000305" key="6"/>
<evidence type="ECO:0000305" key="7">
    <source>
    </source>
</evidence>
<evidence type="ECO:0000312" key="8">
    <source>
        <dbReference type="EMBL" id="CDG69386.1"/>
    </source>
</evidence>
<evidence type="ECO:0000312" key="9">
    <source>
        <dbReference type="RefSeq" id="XP_002164528.2"/>
    </source>
</evidence>
<keyword id="KW-0285">Flavoprotein</keyword>
<keyword id="KW-0288">FMN</keyword>
<keyword id="KW-0472">Membrane</keyword>
<keyword id="KW-0521">NADP</keyword>
<keyword id="KW-0560">Oxidoreductase</keyword>
<keyword id="KW-1185">Reference proteome</keyword>
<keyword id="KW-0812">Transmembrane</keyword>
<keyword id="KW-1133">Transmembrane helix</keyword>
<accession>T2MBC4</accession>
<sequence>MFDNLSGVSYGLLAGILAMLIHLVYQKITELKRRKDELKERESHPTDDLFPKEDFIPYHPSRYSEEEMIKRSNDFYLSMNARRSVRFFSNEDVPDEVIDNIIRTAGTSPSGAHTEPWTFVVIKNKLLKAKVREIIEEEEELNYKQRMGQKWVDDLKPLKTNWIKEYLTEAPYLILVFKQTYGITEDGQKKTHYYNEISASISCGFLLAAIQNAGLVALTSTPLNAGSKLRNLVGRGPNEKIVILLPVGYPSKNCQVPNLKRKPLNEIMIKFD</sequence>
<name>IYD_HYDVU</name>
<protein>
    <recommendedName>
        <fullName evidence="5">Iodotyrosine deiodinase</fullName>
        <ecNumber evidence="4">1.21.1.1</ecNumber>
    </recommendedName>
    <alternativeName>
        <fullName evidence="7">Halotyrosine dehalogenase</fullName>
    </alternativeName>
</protein>
<reference evidence="8" key="1">
    <citation type="submission" date="2012-09" db="EMBL/GenBank/DDBJ databases">
        <authorList>
            <person name="Wenger Y."/>
        </authorList>
    </citation>
    <scope>NUCLEOTIDE SEQUENCE [MRNA]</scope>
</reference>
<reference evidence="6" key="2">
    <citation type="journal article" date="2014" name="Mol. Biosyst.">
        <title>Iodotyrosine deiodinase: a unique flavoprotein present in organisms of diverse phyla.</title>
        <authorList>
            <person name="Phatarphekar A."/>
            <person name="Buss J.M."/>
            <person name="Rokita S.E."/>
        </authorList>
    </citation>
    <scope>FUNCTION</scope>
    <scope>CATALYTIC ACTIVITY</scope>
    <scope>BIOPHYSICOCHEMICAL PROPERTIES</scope>
    <scope>COFACTOR</scope>
</reference>
<dbReference type="EC" id="1.21.1.1" evidence="4"/>
<dbReference type="EMBL" id="HAAD01003154">
    <property type="protein sequence ID" value="CDG69386.1"/>
    <property type="molecule type" value="mRNA"/>
</dbReference>
<dbReference type="RefSeq" id="XP_002164528.2">
    <property type="nucleotide sequence ID" value="XM_002164492.3"/>
</dbReference>
<dbReference type="SMR" id="T2MBC4"/>
<dbReference type="KEGG" id="hmg:100199794"/>
<dbReference type="OMA" id="GANHQPW"/>
<dbReference type="OrthoDB" id="5980588at2759"/>
<dbReference type="Proteomes" id="UP000694840">
    <property type="component" value="Unplaced"/>
</dbReference>
<dbReference type="GO" id="GO:0005886">
    <property type="term" value="C:plasma membrane"/>
    <property type="evidence" value="ECO:0007669"/>
    <property type="project" value="TreeGrafter"/>
</dbReference>
<dbReference type="GO" id="GO:0010181">
    <property type="term" value="F:FMN binding"/>
    <property type="evidence" value="ECO:0000314"/>
    <property type="project" value="UniProtKB"/>
</dbReference>
<dbReference type="GO" id="GO:0140616">
    <property type="term" value="F:iodotyrosine deiodinase activity"/>
    <property type="evidence" value="ECO:0000314"/>
    <property type="project" value="UniProtKB"/>
</dbReference>
<dbReference type="GO" id="GO:0006570">
    <property type="term" value="P:tyrosine metabolic process"/>
    <property type="evidence" value="ECO:0007669"/>
    <property type="project" value="TreeGrafter"/>
</dbReference>
<dbReference type="CDD" id="cd02144">
    <property type="entry name" value="iodotyrosine_dehalogenase"/>
    <property type="match status" value="1"/>
</dbReference>
<dbReference type="FunFam" id="3.40.109.10:FF:000004">
    <property type="entry name" value="Iodotyrosine deiodinase 1"/>
    <property type="match status" value="1"/>
</dbReference>
<dbReference type="Gene3D" id="3.40.109.10">
    <property type="entry name" value="NADH Oxidase"/>
    <property type="match status" value="1"/>
</dbReference>
<dbReference type="InterPro" id="IPR029479">
    <property type="entry name" value="Nitroreductase"/>
</dbReference>
<dbReference type="InterPro" id="IPR000415">
    <property type="entry name" value="Nitroreductase-like"/>
</dbReference>
<dbReference type="InterPro" id="IPR050627">
    <property type="entry name" value="Nitroreductase/BluB"/>
</dbReference>
<dbReference type="PANTHER" id="PTHR23026:SF90">
    <property type="entry name" value="IODOTYROSINE DEIODINASE 1"/>
    <property type="match status" value="1"/>
</dbReference>
<dbReference type="PANTHER" id="PTHR23026">
    <property type="entry name" value="NADPH NITROREDUCTASE"/>
    <property type="match status" value="1"/>
</dbReference>
<dbReference type="Pfam" id="PF00881">
    <property type="entry name" value="Nitroreductase"/>
    <property type="match status" value="1"/>
</dbReference>
<dbReference type="SUPFAM" id="SSF55469">
    <property type="entry name" value="FMN-dependent nitroreductase-like"/>
    <property type="match status" value="1"/>
</dbReference>
<organism evidence="8">
    <name type="scientific">Hydra vulgaris</name>
    <name type="common">Hydra</name>
    <name type="synonym">Hydra attenuata</name>
    <dbReference type="NCBI Taxonomy" id="6087"/>
    <lineage>
        <taxon>Eukaryota</taxon>
        <taxon>Metazoa</taxon>
        <taxon>Cnidaria</taxon>
        <taxon>Hydrozoa</taxon>
        <taxon>Hydroidolina</taxon>
        <taxon>Anthoathecata</taxon>
        <taxon>Aplanulata</taxon>
        <taxon>Hydridae</taxon>
        <taxon>Hydra</taxon>
    </lineage>
</organism>
<comment type="function">
    <text evidence="1 4">Catalyzes the dehalogenation of halotyrosines such as 3,5-diiodo-L-tyrosine (PubMed:24153409). Likely to also catalyze the dehalogenation of other halotyrosines such as 3-bromo-L-tyrosine, 3-chloro-L-tyrosine and 3-iodo-L-tyrosine (By similarity).</text>
</comment>
<comment type="catalytic activity">
    <reaction evidence="4">
        <text>2 iodide + L-tyrosine + 2 NADP(+) = 3,5-diiodo-L-tyrosine + 2 NADPH + H(+)</text>
        <dbReference type="Rhea" id="RHEA:32479"/>
        <dbReference type="ChEBI" id="CHEBI:15378"/>
        <dbReference type="ChEBI" id="CHEBI:16382"/>
        <dbReference type="ChEBI" id="CHEBI:57506"/>
        <dbReference type="ChEBI" id="CHEBI:57783"/>
        <dbReference type="ChEBI" id="CHEBI:58315"/>
        <dbReference type="ChEBI" id="CHEBI:58349"/>
        <dbReference type="EC" id="1.21.1.1"/>
    </reaction>
    <physiologicalReaction direction="right-to-left" evidence="4">
        <dbReference type="Rhea" id="RHEA:32481"/>
    </physiologicalReaction>
</comment>
<comment type="catalytic activity">
    <reaction evidence="1">
        <text>iodide + L-tyrosine + NADP(+) = 3-iodo-L-tyrosine + NADPH</text>
        <dbReference type="Rhea" id="RHEA:27453"/>
        <dbReference type="ChEBI" id="CHEBI:16382"/>
        <dbReference type="ChEBI" id="CHEBI:57783"/>
        <dbReference type="ChEBI" id="CHEBI:58315"/>
        <dbReference type="ChEBI" id="CHEBI:58349"/>
        <dbReference type="ChEBI" id="CHEBI:59898"/>
    </reaction>
    <physiologicalReaction direction="right-to-left" evidence="1">
        <dbReference type="Rhea" id="RHEA:27455"/>
    </physiologicalReaction>
</comment>
<comment type="catalytic activity">
    <reaction evidence="4">
        <text>3-iodo-L-tyrosine + iodide + NADP(+) = 3,5-diiodo-L-tyrosine + NADPH + H(+)</text>
        <dbReference type="Rhea" id="RHEA:27457"/>
        <dbReference type="ChEBI" id="CHEBI:15378"/>
        <dbReference type="ChEBI" id="CHEBI:16382"/>
        <dbReference type="ChEBI" id="CHEBI:57506"/>
        <dbReference type="ChEBI" id="CHEBI:57783"/>
        <dbReference type="ChEBI" id="CHEBI:58349"/>
        <dbReference type="ChEBI" id="CHEBI:59898"/>
    </reaction>
    <physiologicalReaction direction="right-to-left" evidence="4">
        <dbReference type="Rhea" id="RHEA:27459"/>
    </physiologicalReaction>
</comment>
<comment type="catalytic activity">
    <reaction evidence="1">
        <text>L-tyrosine + chloride + NADP(+) = 3-chloro-L-tyrosine + NADPH</text>
        <dbReference type="Rhea" id="RHEA:70343"/>
        <dbReference type="ChEBI" id="CHEBI:17996"/>
        <dbReference type="ChEBI" id="CHEBI:57783"/>
        <dbReference type="ChEBI" id="CHEBI:58315"/>
        <dbReference type="ChEBI" id="CHEBI:58349"/>
        <dbReference type="ChEBI" id="CHEBI:189422"/>
    </reaction>
    <physiologicalReaction direction="right-to-left" evidence="1">
        <dbReference type="Rhea" id="RHEA:70345"/>
    </physiologicalReaction>
</comment>
<comment type="catalytic activity">
    <reaction evidence="1">
        <text>bromide + L-tyrosine + NADP(+) = 3-bromo-L-tyrosine + NADPH</text>
        <dbReference type="Rhea" id="RHEA:70347"/>
        <dbReference type="ChEBI" id="CHEBI:15858"/>
        <dbReference type="ChEBI" id="CHEBI:57783"/>
        <dbReference type="ChEBI" id="CHEBI:58315"/>
        <dbReference type="ChEBI" id="CHEBI:58349"/>
        <dbReference type="ChEBI" id="CHEBI:189423"/>
    </reaction>
    <physiologicalReaction direction="right-to-left" evidence="1">
        <dbReference type="Rhea" id="RHEA:70349"/>
    </physiologicalReaction>
</comment>
<comment type="cofactor">
    <cofactor evidence="4">
        <name>FMN</name>
        <dbReference type="ChEBI" id="CHEBI:58210"/>
    </cofactor>
</comment>
<comment type="biophysicochemical properties">
    <kinetics>
        <KM evidence="4">4 uM for diiodotyrosine (L-DIT)</KM>
        <text evidence="4">Kcat 14 min(-1) for the deiodination of diiodotyrosine (L-DIT).</text>
    </kinetics>
</comment>
<comment type="subcellular location">
    <subcellularLocation>
        <location evidence="3">Membrane</location>
        <topology evidence="3">Single-pass membrane protein</topology>
    </subcellularLocation>
</comment>
<comment type="similarity">
    <text evidence="6">Belongs to the nitroreductase family.</text>
</comment>
<feature type="chain" id="PRO_0000455641" description="Iodotyrosine deiodinase">
    <location>
        <begin position="1"/>
        <end position="272"/>
    </location>
</feature>
<feature type="transmembrane region" description="Helical" evidence="3">
    <location>
        <begin position="5"/>
        <end position="25"/>
    </location>
</feature>
<feature type="binding site" evidence="1">
    <location>
        <begin position="82"/>
        <end position="86"/>
    </location>
    <ligand>
        <name>FMN</name>
        <dbReference type="ChEBI" id="CHEBI:58210"/>
    </ligand>
</feature>
<feature type="binding site" evidence="2">
    <location>
        <begin position="110"/>
        <end position="111"/>
    </location>
    <ligand>
        <name>FMN</name>
        <dbReference type="ChEBI" id="CHEBI:58210"/>
    </ligand>
</feature>
<feature type="binding site" evidence="1">
    <location>
        <position position="110"/>
    </location>
    <ligand>
        <name>FMN</name>
        <dbReference type="ChEBI" id="CHEBI:58210"/>
    </ligand>
</feature>
<feature type="binding site" evidence="1">
    <location>
        <position position="112"/>
    </location>
    <ligand>
        <name>3-iodo-L-tyrosine</name>
        <dbReference type="ChEBI" id="CHEBI:59898"/>
    </ligand>
</feature>
<feature type="binding site" evidence="1">
    <location>
        <position position="139"/>
    </location>
    <ligand>
        <name>3-iodo-L-tyrosine</name>
        <dbReference type="ChEBI" id="CHEBI:59898"/>
    </ligand>
</feature>
<feature type="binding site" evidence="1">
    <location>
        <position position="143"/>
    </location>
    <ligand>
        <name>3-iodo-L-tyrosine</name>
        <dbReference type="ChEBI" id="CHEBI:59898"/>
    </ligand>
</feature>
<feature type="binding site" evidence="1">
    <location>
        <position position="164"/>
    </location>
    <ligand>
        <name>3-iodo-L-tyrosine</name>
        <dbReference type="ChEBI" id="CHEBI:59898"/>
    </ligand>
</feature>
<feature type="binding site" evidence="1">
    <location>
        <begin position="219"/>
        <end position="221"/>
    </location>
    <ligand>
        <name>FMN</name>
        <dbReference type="ChEBI" id="CHEBI:58210"/>
    </ligand>
</feature>
<feature type="binding site" evidence="1">
    <location>
        <position position="261"/>
    </location>
    <ligand>
        <name>FMN</name>
        <dbReference type="ChEBI" id="CHEBI:58210"/>
    </ligand>
</feature>